<proteinExistence type="evidence at protein level"/>
<accession>B3FHP0</accession>
<name>SUCB_BLAHN</name>
<feature type="transit peptide" description="Hydrogenosome" evidence="1">
    <location>
        <begin position="1"/>
        <end position="14"/>
    </location>
</feature>
<feature type="chain" id="PRO_0000438595" description="Succinate--CoA ligase [ADP-forming] subunit beta">
    <location>
        <begin position="15"/>
        <end position="416"/>
    </location>
</feature>
<feature type="binding site" evidence="2">
    <location>
        <position position="64"/>
    </location>
    <ligand>
        <name>ATP</name>
        <dbReference type="ChEBI" id="CHEBI:30616"/>
    </ligand>
</feature>
<feature type="binding site" evidence="2">
    <location>
        <begin position="71"/>
        <end position="73"/>
    </location>
    <ligand>
        <name>ATP</name>
        <dbReference type="ChEBI" id="CHEBI:30616"/>
    </ligand>
</feature>
<feature type="binding site" evidence="2">
    <location>
        <position position="132"/>
    </location>
    <ligand>
        <name>ATP</name>
        <dbReference type="ChEBI" id="CHEBI:30616"/>
    </ligand>
</feature>
<feature type="binding site" evidence="2">
    <location>
        <position position="224"/>
    </location>
    <ligand>
        <name>Mg(2+)</name>
        <dbReference type="ChEBI" id="CHEBI:18420"/>
    </ligand>
</feature>
<feature type="binding site" evidence="2">
    <location>
        <position position="242"/>
    </location>
    <ligand>
        <name>Mg(2+)</name>
        <dbReference type="ChEBI" id="CHEBI:18420"/>
    </ligand>
</feature>
<feature type="binding site" evidence="2">
    <location>
        <position position="293"/>
    </location>
    <ligand>
        <name>substrate</name>
        <note>ligand shared with subunit alpha</note>
    </ligand>
</feature>
<feature type="binding site" evidence="2">
    <location>
        <begin position="350"/>
        <end position="352"/>
    </location>
    <ligand>
        <name>substrate</name>
        <note>ligand shared with subunit alpha</note>
    </ligand>
</feature>
<feature type="site" description="Important for substrate specificity" evidence="5">
    <location>
        <position position="60"/>
    </location>
</feature>
<feature type="site" description="Important for substrate specificity" evidence="5">
    <location>
        <position position="128"/>
    </location>
</feature>
<feature type="helix" evidence="7">
    <location>
        <begin position="19"/>
        <end position="28"/>
    </location>
</feature>
<feature type="strand" evidence="7">
    <location>
        <begin position="37"/>
        <end position="41"/>
    </location>
</feature>
<feature type="helix" evidence="7">
    <location>
        <begin position="42"/>
        <end position="52"/>
    </location>
</feature>
<feature type="turn" evidence="7">
    <location>
        <begin position="53"/>
        <end position="55"/>
    </location>
</feature>
<feature type="strand" evidence="7">
    <location>
        <begin position="61"/>
        <end position="65"/>
    </location>
</feature>
<feature type="strand" evidence="6">
    <location>
        <begin position="68"/>
        <end position="70"/>
    </location>
</feature>
<feature type="turn" evidence="7">
    <location>
        <begin position="72"/>
        <end position="74"/>
    </location>
</feature>
<feature type="strand" evidence="7">
    <location>
        <begin position="84"/>
        <end position="90"/>
    </location>
</feature>
<feature type="helix" evidence="7">
    <location>
        <begin position="91"/>
        <end position="101"/>
    </location>
</feature>
<feature type="strand" evidence="7">
    <location>
        <begin position="104"/>
        <end position="107"/>
    </location>
</feature>
<feature type="turn" evidence="7">
    <location>
        <begin position="109"/>
        <end position="111"/>
    </location>
</feature>
<feature type="helix" evidence="6">
    <location>
        <begin position="112"/>
        <end position="114"/>
    </location>
</feature>
<feature type="strand" evidence="7">
    <location>
        <begin position="116"/>
        <end position="118"/>
    </location>
</feature>
<feature type="strand" evidence="7">
    <location>
        <begin position="121"/>
        <end position="125"/>
    </location>
</feature>
<feature type="strand" evidence="7">
    <location>
        <begin position="129"/>
        <end position="138"/>
    </location>
</feature>
<feature type="turn" evidence="6">
    <location>
        <begin position="141"/>
        <end position="144"/>
    </location>
</feature>
<feature type="strand" evidence="7">
    <location>
        <begin position="147"/>
        <end position="152"/>
    </location>
</feature>
<feature type="helix" evidence="7">
    <location>
        <begin position="158"/>
        <end position="164"/>
    </location>
</feature>
<feature type="helix" evidence="7">
    <location>
        <begin position="166"/>
        <end position="168"/>
    </location>
</feature>
<feature type="strand" evidence="7">
    <location>
        <begin position="169"/>
        <end position="173"/>
    </location>
</feature>
<feature type="turn" evidence="7">
    <location>
        <begin position="176"/>
        <end position="178"/>
    </location>
</feature>
<feature type="helix" evidence="7">
    <location>
        <begin position="182"/>
        <end position="191"/>
    </location>
</feature>
<feature type="helix" evidence="7">
    <location>
        <begin position="197"/>
        <end position="215"/>
    </location>
</feature>
<feature type="strand" evidence="7">
    <location>
        <begin position="219"/>
        <end position="230"/>
    </location>
</feature>
<feature type="strand" evidence="7">
    <location>
        <begin position="236"/>
        <end position="242"/>
    </location>
</feature>
<feature type="strand" evidence="7">
    <location>
        <begin position="244"/>
        <end position="246"/>
    </location>
</feature>
<keyword id="KW-0002">3D-structure</keyword>
<keyword id="KW-0067">ATP-binding</keyword>
<keyword id="KW-0377">Hydrogenosome</keyword>
<keyword id="KW-0436">Ligase</keyword>
<keyword id="KW-0460">Magnesium</keyword>
<keyword id="KW-0479">Metal-binding</keyword>
<keyword id="KW-0547">Nucleotide-binding</keyword>
<keyword id="KW-0809">Transit peptide</keyword>
<keyword id="KW-0816">Tricarboxylic acid cycle</keyword>
<gene>
    <name type="primary">SCSb</name>
</gene>
<protein>
    <recommendedName>
        <fullName evidence="5">Succinate--CoA ligase [ADP-forming] subunit beta</fullName>
        <ecNumber evidence="2 3">6.2.1.5</ecNumber>
    </recommendedName>
    <alternativeName>
        <fullName evidence="2 4">Succinyl-CoA synthetase beta chain</fullName>
        <shortName evidence="2">SCS-beta</shortName>
    </alternativeName>
</protein>
<comment type="function">
    <text evidence="2 3">Succinyl-CoA synthetase functions in the citric acid cycle (TCA), coupling the hydrolysis of succinyl-CoA to the synthesis of ATP and thus represents the only step of substrate-level phosphorylation in the TCA. The beta subunit provides nucleotide specificity of the enzyme and binds the substrate succinate, while the binding sites for coenzyme A and phosphate are found in the alpha subunit.</text>
</comment>
<comment type="catalytic activity">
    <reaction evidence="2 3">
        <text>succinate + ATP + CoA = succinyl-CoA + ADP + phosphate</text>
        <dbReference type="Rhea" id="RHEA:17661"/>
        <dbReference type="ChEBI" id="CHEBI:30031"/>
        <dbReference type="ChEBI" id="CHEBI:30616"/>
        <dbReference type="ChEBI" id="CHEBI:43474"/>
        <dbReference type="ChEBI" id="CHEBI:57287"/>
        <dbReference type="ChEBI" id="CHEBI:57292"/>
        <dbReference type="ChEBI" id="CHEBI:456216"/>
        <dbReference type="EC" id="6.2.1.5"/>
    </reaction>
</comment>
<comment type="cofactor">
    <cofactor evidence="2">
        <name>Mg(2+)</name>
        <dbReference type="ChEBI" id="CHEBI:18420"/>
    </cofactor>
    <text evidence="2">Binds 1 Mg(2+) ion per subunit.</text>
</comment>
<comment type="biophysicochemical properties">
    <kinetics>
        <KM evidence="3">68 uM for ATP</KM>
        <text evidence="3">kcat is 133 min(-1) with ATP as substrate.</text>
    </kinetics>
</comment>
<comment type="pathway">
    <text evidence="2 5">Carbohydrate metabolism; tricarboxylic acid cycle; succinate from succinyl-CoA (ligase route): step 1/1.</text>
</comment>
<comment type="subunit">
    <text evidence="2">Heterodimer of an alpha and a beta subunit.</text>
</comment>
<comment type="subcellular location">
    <subcellularLocation>
        <location evidence="3">Hydrogenosome</location>
    </subcellularLocation>
    <text evidence="3">Found in the matrix of the mitochondrion-like organelles (MLO) of Blastocystis.</text>
</comment>
<comment type="similarity">
    <text evidence="2">Belongs to the succinate/malate CoA ligase beta subunit family.</text>
</comment>
<sequence length="416" mass="45145">MLRMAPKTVGAVRNLNIHEWQSKQLIQKYGGRAQSGEVAFSPERSRDIAKKLWNQFPGCKFVVKAQVLAGGRGKGHWEHGMQGGVKLAKTPEEVYEIANEMIGHKLITKQTGAKGINCNKVMVCGAVKILKEFYLSILLDRAMGCPVIIATSQGGMGIEEVAQKCPECLFKVPISVKNGPTNEQLVKLAKDLGLEGDLVQDCVDNVKALYQVFDKCDSTMVEINPLGVIETPTDEKVICCLDAKIAFDKDAAFRQKEIFALRDKSREDPRDVRASLADLNYVGLDGDIGCMVNGAGLAMATMDTINYFGGSAANFLDVGGNAKKEQITEALRILNSDKHVKSILINIFGGIMRCDVVAQGIMDAVREMKLDLPLVVRLEGTNVAKGKEILKSSGLNIIPANDLGDAAKKAVASLKH</sequence>
<organism>
    <name type="scientific">Blastocystis sp. subtype 1 (strain ATCC 50177 / NandII)</name>
    <dbReference type="NCBI Taxonomy" id="478820"/>
    <lineage>
        <taxon>Eukaryota</taxon>
        <taxon>Sar</taxon>
        <taxon>Stramenopiles</taxon>
        <taxon>Bigyra</taxon>
        <taxon>Opalozoa</taxon>
        <taxon>Opalinata</taxon>
        <taxon>Blastocystidae</taxon>
        <taxon>Blastocystis</taxon>
    </lineage>
</organism>
<evidence type="ECO:0000255" key="1"/>
<evidence type="ECO:0000255" key="2">
    <source>
        <dbReference type="HAMAP-Rule" id="MF_03219"/>
    </source>
</evidence>
<evidence type="ECO:0000269" key="3">
    <source>
    </source>
</evidence>
<evidence type="ECO:0000303" key="4">
    <source>
    </source>
</evidence>
<evidence type="ECO:0000305" key="5">
    <source>
    </source>
</evidence>
<evidence type="ECO:0007829" key="6">
    <source>
        <dbReference type="PDB" id="6NO3"/>
    </source>
</evidence>
<evidence type="ECO:0007829" key="7">
    <source>
        <dbReference type="PDB" id="6NO6"/>
    </source>
</evidence>
<dbReference type="EC" id="6.2.1.5" evidence="2 3"/>
<dbReference type="EMBL" id="EU076379">
    <property type="protein sequence ID" value="ABY62724.1"/>
    <property type="molecule type" value="mRNA"/>
</dbReference>
<dbReference type="EMBL" id="EU076380">
    <property type="protein sequence ID" value="ABY62725.1"/>
    <property type="molecule type" value="Genomic_DNA"/>
</dbReference>
<dbReference type="PDB" id="6NO0">
    <property type="method" value="X-ray"/>
    <property type="resolution" value="2.21 A"/>
    <property type="chains" value="A/B=15-253"/>
</dbReference>
<dbReference type="PDB" id="6NO1">
    <property type="method" value="X-ray"/>
    <property type="resolution" value="2.44 A"/>
    <property type="chains" value="A/B=15-253"/>
</dbReference>
<dbReference type="PDB" id="6NO2">
    <property type="method" value="X-ray"/>
    <property type="resolution" value="2.16 A"/>
    <property type="chains" value="A/B=15-253"/>
</dbReference>
<dbReference type="PDB" id="6NO3">
    <property type="method" value="X-ray"/>
    <property type="resolution" value="1.94 A"/>
    <property type="chains" value="A/B=15-253"/>
</dbReference>
<dbReference type="PDB" id="6NO4">
    <property type="method" value="X-ray"/>
    <property type="resolution" value="2.24 A"/>
    <property type="chains" value="A/B=15-253"/>
</dbReference>
<dbReference type="PDB" id="6NO5">
    <property type="method" value="X-ray"/>
    <property type="resolution" value="2.07 A"/>
    <property type="chains" value="A/B/C/D=15-253"/>
</dbReference>
<dbReference type="PDB" id="6NO6">
    <property type="method" value="X-ray"/>
    <property type="resolution" value="1.91 A"/>
    <property type="chains" value="A/B=15-253"/>
</dbReference>
<dbReference type="PDBsum" id="6NO0"/>
<dbReference type="PDBsum" id="6NO1"/>
<dbReference type="PDBsum" id="6NO2"/>
<dbReference type="PDBsum" id="6NO3"/>
<dbReference type="PDBsum" id="6NO4"/>
<dbReference type="PDBsum" id="6NO5"/>
<dbReference type="PDBsum" id="6NO6"/>
<dbReference type="SMR" id="B3FHP0"/>
<dbReference type="UniPathway" id="UPA00223">
    <property type="reaction ID" value="UER00999"/>
</dbReference>
<dbReference type="GO" id="GO:0042566">
    <property type="term" value="C:hydrogenosome"/>
    <property type="evidence" value="ECO:0007669"/>
    <property type="project" value="UniProtKB-SubCell"/>
</dbReference>
<dbReference type="GO" id="GO:0005739">
    <property type="term" value="C:mitochondrion"/>
    <property type="evidence" value="ECO:0007669"/>
    <property type="project" value="TreeGrafter"/>
</dbReference>
<dbReference type="GO" id="GO:0042709">
    <property type="term" value="C:succinate-CoA ligase complex"/>
    <property type="evidence" value="ECO:0007669"/>
    <property type="project" value="TreeGrafter"/>
</dbReference>
<dbReference type="GO" id="GO:0005524">
    <property type="term" value="F:ATP binding"/>
    <property type="evidence" value="ECO:0007669"/>
    <property type="project" value="UniProtKB-UniRule"/>
</dbReference>
<dbReference type="GO" id="GO:0000287">
    <property type="term" value="F:magnesium ion binding"/>
    <property type="evidence" value="ECO:0007669"/>
    <property type="project" value="UniProtKB-UniRule"/>
</dbReference>
<dbReference type="GO" id="GO:0004775">
    <property type="term" value="F:succinate-CoA ligase (ADP-forming) activity"/>
    <property type="evidence" value="ECO:0007669"/>
    <property type="project" value="UniProtKB-UniRule"/>
</dbReference>
<dbReference type="GO" id="GO:0006104">
    <property type="term" value="P:succinyl-CoA metabolic process"/>
    <property type="evidence" value="ECO:0007669"/>
    <property type="project" value="TreeGrafter"/>
</dbReference>
<dbReference type="GO" id="GO:0006099">
    <property type="term" value="P:tricarboxylic acid cycle"/>
    <property type="evidence" value="ECO:0007669"/>
    <property type="project" value="UniProtKB-UniRule"/>
</dbReference>
<dbReference type="FunFam" id="3.30.470.20:FF:000002">
    <property type="entry name" value="Succinate--CoA ligase [ADP-forming] subunit beta"/>
    <property type="match status" value="1"/>
</dbReference>
<dbReference type="FunFam" id="3.40.50.261:FF:000001">
    <property type="entry name" value="Succinate--CoA ligase [ADP-forming] subunit beta"/>
    <property type="match status" value="1"/>
</dbReference>
<dbReference type="FunFam" id="3.30.1490.20:FF:000004">
    <property type="entry name" value="Succinate--CoA ligase [ADP-forming] subunit beta, mitochondrial"/>
    <property type="match status" value="1"/>
</dbReference>
<dbReference type="Gene3D" id="3.30.1490.20">
    <property type="entry name" value="ATP-grasp fold, A domain"/>
    <property type="match status" value="1"/>
</dbReference>
<dbReference type="Gene3D" id="3.30.470.20">
    <property type="entry name" value="ATP-grasp fold, B domain"/>
    <property type="match status" value="1"/>
</dbReference>
<dbReference type="Gene3D" id="3.40.50.261">
    <property type="entry name" value="Succinyl-CoA synthetase domains"/>
    <property type="match status" value="1"/>
</dbReference>
<dbReference type="HAMAP" id="MF_00558">
    <property type="entry name" value="Succ_CoA_beta"/>
    <property type="match status" value="1"/>
</dbReference>
<dbReference type="InterPro" id="IPR013650">
    <property type="entry name" value="ATP-grasp_succ-CoA_synth-type"/>
</dbReference>
<dbReference type="InterPro" id="IPR013815">
    <property type="entry name" value="ATP_grasp_subdomain_1"/>
</dbReference>
<dbReference type="InterPro" id="IPR017866">
    <property type="entry name" value="Succ-CoA_synthase_bsu_CS"/>
</dbReference>
<dbReference type="InterPro" id="IPR005811">
    <property type="entry name" value="SUCC_ACL_C"/>
</dbReference>
<dbReference type="InterPro" id="IPR005809">
    <property type="entry name" value="Succ_CoA_ligase-like_bsu"/>
</dbReference>
<dbReference type="InterPro" id="IPR016102">
    <property type="entry name" value="Succinyl-CoA_synth-like"/>
</dbReference>
<dbReference type="NCBIfam" id="NF001913">
    <property type="entry name" value="PRK00696.1"/>
    <property type="match status" value="1"/>
</dbReference>
<dbReference type="NCBIfam" id="TIGR01016">
    <property type="entry name" value="sucCoAbeta"/>
    <property type="match status" value="1"/>
</dbReference>
<dbReference type="PANTHER" id="PTHR11815:SF10">
    <property type="entry name" value="SUCCINATE--COA LIGASE [GDP-FORMING] SUBUNIT BETA, MITOCHONDRIAL"/>
    <property type="match status" value="1"/>
</dbReference>
<dbReference type="PANTHER" id="PTHR11815">
    <property type="entry name" value="SUCCINYL-COA SYNTHETASE BETA CHAIN"/>
    <property type="match status" value="1"/>
</dbReference>
<dbReference type="Pfam" id="PF08442">
    <property type="entry name" value="ATP-grasp_2"/>
    <property type="match status" value="1"/>
</dbReference>
<dbReference type="Pfam" id="PF00549">
    <property type="entry name" value="Ligase_CoA"/>
    <property type="match status" value="1"/>
</dbReference>
<dbReference type="PIRSF" id="PIRSF001554">
    <property type="entry name" value="SucCS_beta"/>
    <property type="match status" value="1"/>
</dbReference>
<dbReference type="SUPFAM" id="SSF56059">
    <property type="entry name" value="Glutathione synthetase ATP-binding domain-like"/>
    <property type="match status" value="1"/>
</dbReference>
<dbReference type="SUPFAM" id="SSF52210">
    <property type="entry name" value="Succinyl-CoA synthetase domains"/>
    <property type="match status" value="1"/>
</dbReference>
<dbReference type="PROSITE" id="PS01217">
    <property type="entry name" value="SUCCINYL_COA_LIG_3"/>
    <property type="match status" value="1"/>
</dbReference>
<reference key="1">
    <citation type="journal article" date="2008" name="Mol. Microbiol.">
        <title>Localization and nucleotide specificity of Blastocystis succinyl-CoA synthetase.</title>
        <authorList>
            <person name="Hamblin K."/>
            <person name="Standley D.M."/>
            <person name="Rogers M.B."/>
            <person name="Stechmann A."/>
            <person name="Roger A.J."/>
            <person name="Maytum R."/>
            <person name="van der Giezen M."/>
        </authorList>
    </citation>
    <scope>NUCLEOTIDE SEQUENCE [GENOMIC DNA / MRNA]</scope>
    <scope>FUNCTION</scope>
    <scope>CATALYTIC ACTIVITY</scope>
    <scope>SUBCELLULAR LOCATION</scope>
    <scope>SUBSTRATE SPECIFICITY</scope>
    <scope>BIOPHYSICOCHEMICAL PROPERTIES</scope>
    <source>
        <strain>ATCC 50177 / NandII</strain>
    </source>
</reference>